<gene>
    <name type="primary">rocB</name>
    <name type="ordered locus">BSU37770</name>
    <name type="ORF">ipa-77d</name>
</gene>
<keyword id="KW-0056">Arginine metabolism</keyword>
<keyword id="KW-1185">Reference proteome</keyword>
<accession>P39635</accession>
<proteinExistence type="evidence at transcript level"/>
<feature type="chain" id="PRO_0000097395" description="Protein RocB">
    <location>
        <begin position="1"/>
        <end position="566"/>
    </location>
</feature>
<dbReference type="EMBL" id="X73124">
    <property type="protein sequence ID" value="CAA51633.1"/>
    <property type="molecule type" value="Genomic_DNA"/>
</dbReference>
<dbReference type="EMBL" id="AL009126">
    <property type="protein sequence ID" value="CAB15804.1"/>
    <property type="molecule type" value="Genomic_DNA"/>
</dbReference>
<dbReference type="PIR" id="S39732">
    <property type="entry name" value="S39732"/>
</dbReference>
<dbReference type="RefSeq" id="NP_391657.1">
    <property type="nucleotide sequence ID" value="NC_000964.3"/>
</dbReference>
<dbReference type="RefSeq" id="WP_003227487.1">
    <property type="nucleotide sequence ID" value="NZ_OZ025638.1"/>
</dbReference>
<dbReference type="FunCoup" id="P39635">
    <property type="interactions" value="43"/>
</dbReference>
<dbReference type="STRING" id="224308.BSU37770"/>
<dbReference type="MEROPS" id="M20.A20"/>
<dbReference type="PaxDb" id="224308-BSU37770"/>
<dbReference type="EnsemblBacteria" id="CAB15804">
    <property type="protein sequence ID" value="CAB15804"/>
    <property type="gene ID" value="BSU_37770"/>
</dbReference>
<dbReference type="GeneID" id="937220"/>
<dbReference type="KEGG" id="bsu:BSU37770"/>
<dbReference type="PATRIC" id="fig|224308.179.peg.4089"/>
<dbReference type="eggNOG" id="COG4187">
    <property type="taxonomic scope" value="Bacteria"/>
</dbReference>
<dbReference type="InParanoid" id="P39635"/>
<dbReference type="OrthoDB" id="9815360at2"/>
<dbReference type="PhylomeDB" id="P39635"/>
<dbReference type="BioCyc" id="BSUB:BSU37770-MONOMER"/>
<dbReference type="Proteomes" id="UP000001570">
    <property type="component" value="Chromosome"/>
</dbReference>
<dbReference type="GO" id="GO:0016787">
    <property type="term" value="F:hydrolase activity"/>
    <property type="evidence" value="ECO:0007669"/>
    <property type="project" value="InterPro"/>
</dbReference>
<dbReference type="GO" id="GO:0006525">
    <property type="term" value="P:arginine metabolic process"/>
    <property type="evidence" value="ECO:0007669"/>
    <property type="project" value="UniProtKB-KW"/>
</dbReference>
<dbReference type="CDD" id="cd05654">
    <property type="entry name" value="M20_ArgE_RocB"/>
    <property type="match status" value="1"/>
</dbReference>
<dbReference type="Gene3D" id="3.40.630.10">
    <property type="entry name" value="Zn peptidases"/>
    <property type="match status" value="1"/>
</dbReference>
<dbReference type="InterPro" id="IPR002933">
    <property type="entry name" value="Peptidase_M20"/>
</dbReference>
<dbReference type="InterPro" id="IPR050072">
    <property type="entry name" value="Peptidase_M20A"/>
</dbReference>
<dbReference type="InterPro" id="IPR012166">
    <property type="entry name" value="Uncharacterised_RocB"/>
</dbReference>
<dbReference type="PANTHER" id="PTHR43808">
    <property type="entry name" value="ACETYLORNITHINE DEACETYLASE"/>
    <property type="match status" value="1"/>
</dbReference>
<dbReference type="PANTHER" id="PTHR43808:SF27">
    <property type="entry name" value="PROTEIN ROCB"/>
    <property type="match status" value="1"/>
</dbReference>
<dbReference type="Pfam" id="PF01546">
    <property type="entry name" value="Peptidase_M20"/>
    <property type="match status" value="1"/>
</dbReference>
<dbReference type="PIRSF" id="PIRSF010386">
    <property type="entry name" value="RocB"/>
    <property type="match status" value="1"/>
</dbReference>
<dbReference type="SUPFAM" id="SSF53187">
    <property type="entry name" value="Zn-dependent exopeptidases"/>
    <property type="match status" value="1"/>
</dbReference>
<name>ROCB_BACSU</name>
<sequence length="566" mass="64909">MQYTKISHMNPAERVEALTASLVSLSSVNGTVGEGTKADFIKEVITSYPYFQENPSHVWEQAIPNDPYKRKNIFAFIKGHGESRNTVIYHAHLDTVGIEDFGPLKDIAFDCEKLAEYFSRYEFDQDVQRDAKSGEWMFGRGSVDMQSGIAVHLANLLHFSENLETLPGNVLFMANPDEESQHSGILASISELNRLKKEKQLHYLAAINTDFITPLYDGDQTRYIYTGAAGKLLPCFYIYGREVHVGDTLAGIDPNFISSEITSRLHNNIHLAEKVEGELVLPPSCLYQRDNKESYNVQTAVSTSLYFNCFIYERTAKEMMDLLIEVTEEACRETEQKLSDYYEEYVKRANLPKKHLSWGIQVYSLEQYLEKLRNRGIDPEQCIEQTFKANEHLELRMRCFQAIEELQKLDPDQGAKVILFYAPPYLPHNYLKEDSARDQLLQHVIKEAADKTAESTGETFVFKKFFPYLADGSFLSLHETDGEIDSFIRNFPGWNMIGTIPFKDIRKLNIPSINMGVYGKDGHKWTERVYKPYTFHVLPLLIQQTTVHLLQSYRMTITAKEPKGEG</sequence>
<reference key="1">
    <citation type="journal article" date="1993" name="Mol. Microbiol.">
        <title>Bacillus subtilis genome project: cloning and sequencing of the 97 kb region from 325 degrees to 333 degrees.</title>
        <authorList>
            <person name="Glaser P."/>
            <person name="Kunst F."/>
            <person name="Arnaud M."/>
            <person name="Coudart M.P."/>
            <person name="Gonzales W."/>
            <person name="Hullo M.-F."/>
            <person name="Ionescu M."/>
            <person name="Lubochinsky B."/>
            <person name="Marcelino L."/>
            <person name="Moszer I."/>
            <person name="Presecan E."/>
            <person name="Santana M."/>
            <person name="Schneider E."/>
            <person name="Schweizer J."/>
            <person name="Vertes A."/>
            <person name="Rapoport G."/>
            <person name="Danchin A."/>
        </authorList>
    </citation>
    <scope>NUCLEOTIDE SEQUENCE [GENOMIC DNA]</scope>
    <source>
        <strain>168</strain>
    </source>
</reference>
<reference key="2">
    <citation type="journal article" date="1997" name="Nature">
        <title>The complete genome sequence of the Gram-positive bacterium Bacillus subtilis.</title>
        <authorList>
            <person name="Kunst F."/>
            <person name="Ogasawara N."/>
            <person name="Moszer I."/>
            <person name="Albertini A.M."/>
            <person name="Alloni G."/>
            <person name="Azevedo V."/>
            <person name="Bertero M.G."/>
            <person name="Bessieres P."/>
            <person name="Bolotin A."/>
            <person name="Borchert S."/>
            <person name="Borriss R."/>
            <person name="Boursier L."/>
            <person name="Brans A."/>
            <person name="Braun M."/>
            <person name="Brignell S.C."/>
            <person name="Bron S."/>
            <person name="Brouillet S."/>
            <person name="Bruschi C.V."/>
            <person name="Caldwell B."/>
            <person name="Capuano V."/>
            <person name="Carter N.M."/>
            <person name="Choi S.-K."/>
            <person name="Codani J.-J."/>
            <person name="Connerton I.F."/>
            <person name="Cummings N.J."/>
            <person name="Daniel R.A."/>
            <person name="Denizot F."/>
            <person name="Devine K.M."/>
            <person name="Duesterhoeft A."/>
            <person name="Ehrlich S.D."/>
            <person name="Emmerson P.T."/>
            <person name="Entian K.-D."/>
            <person name="Errington J."/>
            <person name="Fabret C."/>
            <person name="Ferrari E."/>
            <person name="Foulger D."/>
            <person name="Fritz C."/>
            <person name="Fujita M."/>
            <person name="Fujita Y."/>
            <person name="Fuma S."/>
            <person name="Galizzi A."/>
            <person name="Galleron N."/>
            <person name="Ghim S.-Y."/>
            <person name="Glaser P."/>
            <person name="Goffeau A."/>
            <person name="Golightly E.J."/>
            <person name="Grandi G."/>
            <person name="Guiseppi G."/>
            <person name="Guy B.J."/>
            <person name="Haga K."/>
            <person name="Haiech J."/>
            <person name="Harwood C.R."/>
            <person name="Henaut A."/>
            <person name="Hilbert H."/>
            <person name="Holsappel S."/>
            <person name="Hosono S."/>
            <person name="Hullo M.-F."/>
            <person name="Itaya M."/>
            <person name="Jones L.-M."/>
            <person name="Joris B."/>
            <person name="Karamata D."/>
            <person name="Kasahara Y."/>
            <person name="Klaerr-Blanchard M."/>
            <person name="Klein C."/>
            <person name="Kobayashi Y."/>
            <person name="Koetter P."/>
            <person name="Koningstein G."/>
            <person name="Krogh S."/>
            <person name="Kumano M."/>
            <person name="Kurita K."/>
            <person name="Lapidus A."/>
            <person name="Lardinois S."/>
            <person name="Lauber J."/>
            <person name="Lazarevic V."/>
            <person name="Lee S.-M."/>
            <person name="Levine A."/>
            <person name="Liu H."/>
            <person name="Masuda S."/>
            <person name="Mauel C."/>
            <person name="Medigue C."/>
            <person name="Medina N."/>
            <person name="Mellado R.P."/>
            <person name="Mizuno M."/>
            <person name="Moestl D."/>
            <person name="Nakai S."/>
            <person name="Noback M."/>
            <person name="Noone D."/>
            <person name="O'Reilly M."/>
            <person name="Ogawa K."/>
            <person name="Ogiwara A."/>
            <person name="Oudega B."/>
            <person name="Park S.-H."/>
            <person name="Parro V."/>
            <person name="Pohl T.M."/>
            <person name="Portetelle D."/>
            <person name="Porwollik S."/>
            <person name="Prescott A.M."/>
            <person name="Presecan E."/>
            <person name="Pujic P."/>
            <person name="Purnelle B."/>
            <person name="Rapoport G."/>
            <person name="Rey M."/>
            <person name="Reynolds S."/>
            <person name="Rieger M."/>
            <person name="Rivolta C."/>
            <person name="Rocha E."/>
            <person name="Roche B."/>
            <person name="Rose M."/>
            <person name="Sadaie Y."/>
            <person name="Sato T."/>
            <person name="Scanlan E."/>
            <person name="Schleich S."/>
            <person name="Schroeter R."/>
            <person name="Scoffone F."/>
            <person name="Sekiguchi J."/>
            <person name="Sekowska A."/>
            <person name="Seror S.J."/>
            <person name="Serror P."/>
            <person name="Shin B.-S."/>
            <person name="Soldo B."/>
            <person name="Sorokin A."/>
            <person name="Tacconi E."/>
            <person name="Takagi T."/>
            <person name="Takahashi H."/>
            <person name="Takemaru K."/>
            <person name="Takeuchi M."/>
            <person name="Tamakoshi A."/>
            <person name="Tanaka T."/>
            <person name="Terpstra P."/>
            <person name="Tognoni A."/>
            <person name="Tosato V."/>
            <person name="Uchiyama S."/>
            <person name="Vandenbol M."/>
            <person name="Vannier F."/>
            <person name="Vassarotti A."/>
            <person name="Viari A."/>
            <person name="Wambutt R."/>
            <person name="Wedler E."/>
            <person name="Wedler H."/>
            <person name="Weitzenegger T."/>
            <person name="Winters P."/>
            <person name="Wipat A."/>
            <person name="Yamamoto H."/>
            <person name="Yamane K."/>
            <person name="Yasumoto K."/>
            <person name="Yata K."/>
            <person name="Yoshida K."/>
            <person name="Yoshikawa H.-F."/>
            <person name="Zumstein E."/>
            <person name="Yoshikawa H."/>
            <person name="Danchin A."/>
        </authorList>
    </citation>
    <scope>NUCLEOTIDE SEQUENCE [LARGE SCALE GENOMIC DNA]</scope>
    <source>
        <strain>168</strain>
    </source>
</reference>
<comment type="function">
    <text>Involved in arginine degradative pathway.</text>
</comment>
<comment type="induction">
    <text>By arginine.</text>
</comment>
<protein>
    <recommendedName>
        <fullName>Protein RocB</fullName>
    </recommendedName>
</protein>
<organism>
    <name type="scientific">Bacillus subtilis (strain 168)</name>
    <dbReference type="NCBI Taxonomy" id="224308"/>
    <lineage>
        <taxon>Bacteria</taxon>
        <taxon>Bacillati</taxon>
        <taxon>Bacillota</taxon>
        <taxon>Bacilli</taxon>
        <taxon>Bacillales</taxon>
        <taxon>Bacillaceae</taxon>
        <taxon>Bacillus</taxon>
    </lineage>
</organism>